<evidence type="ECO:0000250" key="1"/>
<evidence type="ECO:0000269" key="2">
    <source>
    </source>
</evidence>
<evidence type="ECO:0000305" key="3"/>
<sequence length="1298" mass="147547">MSQFSTEDEAELQTLLRKLLKSVKDRISGAPSVECAEEILLHLEETDKNFHNYEFVKYLREYVESSLGAVIEVETENFTKGEGHAVGSGQDTLVHAVTKNTRESTQYKQMMQTLKQTMMMVVESLINKFEEDQMKREEMDRKIQHQQSISQYADNCSDSDSSFNQSYAFIKHEQLQVIAEKLDPGRPREVRWEALQSLCHAPPSDVLSCESWTGLRRNLSTALTDPDPELSDKVLQFFAKTFSSSPLNVTKDIYASIGNTKTLEAHFLYHKLSFPSGTTSIDANRPDMARLLKQMRLMNDFQKEVTTFWIRHPEKYMEEIIENTLSLLALHSEQGMSSPGSEKSLEPIHLISLLDIKATWFKKWMHGYYSRTVVLRLLERKYKSLIVNALQQCIYYFDSCDALSEETLEMIHSLEHQQIGPAGRTLYTSKELEFVYFVHSLCVLGRLVMYTNGRKFFPIKVKKRRDPVTLTDLVVILINIMYQHPKPSCGETALADTMSPTNLVMEVLRTLCDRTECAVECLYQIPVIETLLAPLITLLTGKLPKLNSMESALTHTADTLARIATTERGLSLLLYDRNLVSAEGESISAAHLIVQFTQKLLAKELQVENSSSMSGAFIFVCRQMYNTCEGLQVLRPYSLHECIAQAWRTTSSMSERVPTPVPGAPPALASQELQSVVAWEEMLLDNLLNFAATPKGLLLLQQTGAINECVTYMFSRFTKKLQVSRCEKFGYGVMVTQVATTAPGIVALQSSGFVQTIVVELWSALECGREDVRVVHPKSTPMDPIDRSCLKSFLSLVNLLSSPHAVWELLGHRALPNKTEYNLREMATSVLDLMDRLIIINSDAKIHSLFNYEQSHTFGLRLLSVLCCNLDSFLLLESQYKLTDLLLQGQRDNVTEPPSGEGEFIIDGLSVERNHILVRICAVGGPSERKLPPRALQKGNDPYPWPMVSTYPLPKYYIFDVPKILRTKQESEIGAFLTSSKETERDASWMDDCRRQFCKIMATKSNTLTGYVLADLLEMVVLHLSSSSNDCFFPPAEYKVVDNSVKTRSLSSVEQLGVEISLRYGKFLKLLREDSEQDLCLLLKHCQEFLSQQRVKVTSELCGYPGHDWFASTVFLLMHGDVGRSLSLLLRFSRLLPSAFLWPPRLHSSVHLPIEIAQSAIHPIYSCTAHYVEMLLKAEVPLVFSAFRMSGFTPSQICVQWLGQCFWNYLDWPEICQYVTTCVIMGPDYQVYMCVSALRHLQQDILQHTQTQDLQVFLKEEPIQGFRVSNYLEYMEGLERSYRSMVLSDMRSILPRSS</sequence>
<name>BROMI_DANRE</name>
<organism>
    <name type="scientific">Danio rerio</name>
    <name type="common">Zebrafish</name>
    <name type="synonym">Brachydanio rerio</name>
    <dbReference type="NCBI Taxonomy" id="7955"/>
    <lineage>
        <taxon>Eukaryota</taxon>
        <taxon>Metazoa</taxon>
        <taxon>Chordata</taxon>
        <taxon>Craniata</taxon>
        <taxon>Vertebrata</taxon>
        <taxon>Euteleostomi</taxon>
        <taxon>Actinopterygii</taxon>
        <taxon>Neopterygii</taxon>
        <taxon>Teleostei</taxon>
        <taxon>Ostariophysi</taxon>
        <taxon>Cypriniformes</taxon>
        <taxon>Danionidae</taxon>
        <taxon>Danioninae</taxon>
        <taxon>Danio</taxon>
    </lineage>
</organism>
<comment type="function">
    <text evidence="2">Required for high-level Shh responses in the developing neural tube. Together with cdk20, controls the structure of the primary cilium by coordinating assembly of the ciliary membrane and axoneme, allowing gli2 to be properly activated in response to SHH signaling.</text>
</comment>
<comment type="subunit">
    <text evidence="1">Interacts with cdk20, which promotes cdk20 stability and function.</text>
</comment>
<comment type="subcellular location">
    <subcellularLocation>
        <location evidence="1">Cytoplasm</location>
    </subcellularLocation>
    <subcellularLocation>
        <location evidence="1">Cell projection</location>
        <location evidence="1">Cilium</location>
    </subcellularLocation>
</comment>
<comment type="disruption phenotype">
    <text evidence="2">Fish are viable during embryogenesis and early larval stages, but exhibit curvature of the body axis and hydrocephalus, and curled cilia in distal kidney tubules.</text>
</comment>
<comment type="caution">
    <text evidence="3">The Rab-GAP TBC domain appears to be inactive, probably due to a lack of the essential Arg and Gln in the catalytic finger motifs.</text>
</comment>
<proteinExistence type="inferred from homology"/>
<reference key="1">
    <citation type="journal article" date="2013" name="Nature">
        <title>The zebrafish reference genome sequence and its relationship to the human genome.</title>
        <authorList>
            <person name="Howe K."/>
            <person name="Clark M.D."/>
            <person name="Torroja C.F."/>
            <person name="Torrance J."/>
            <person name="Berthelot C."/>
            <person name="Muffato M."/>
            <person name="Collins J.E."/>
            <person name="Humphray S."/>
            <person name="McLaren K."/>
            <person name="Matthews L."/>
            <person name="McLaren S."/>
            <person name="Sealy I."/>
            <person name="Caccamo M."/>
            <person name="Churcher C."/>
            <person name="Scott C."/>
            <person name="Barrett J.C."/>
            <person name="Koch R."/>
            <person name="Rauch G.J."/>
            <person name="White S."/>
            <person name="Chow W."/>
            <person name="Kilian B."/>
            <person name="Quintais L.T."/>
            <person name="Guerra-Assuncao J.A."/>
            <person name="Zhou Y."/>
            <person name="Gu Y."/>
            <person name="Yen J."/>
            <person name="Vogel J.H."/>
            <person name="Eyre T."/>
            <person name="Redmond S."/>
            <person name="Banerjee R."/>
            <person name="Chi J."/>
            <person name="Fu B."/>
            <person name="Langley E."/>
            <person name="Maguire S.F."/>
            <person name="Laird G.K."/>
            <person name="Lloyd D."/>
            <person name="Kenyon E."/>
            <person name="Donaldson S."/>
            <person name="Sehra H."/>
            <person name="Almeida-King J."/>
            <person name="Loveland J."/>
            <person name="Trevanion S."/>
            <person name="Jones M."/>
            <person name="Quail M."/>
            <person name="Willey D."/>
            <person name="Hunt A."/>
            <person name="Burton J."/>
            <person name="Sims S."/>
            <person name="McLay K."/>
            <person name="Plumb B."/>
            <person name="Davis J."/>
            <person name="Clee C."/>
            <person name="Oliver K."/>
            <person name="Clark R."/>
            <person name="Riddle C."/>
            <person name="Elliot D."/>
            <person name="Threadgold G."/>
            <person name="Harden G."/>
            <person name="Ware D."/>
            <person name="Begum S."/>
            <person name="Mortimore B."/>
            <person name="Kerry G."/>
            <person name="Heath P."/>
            <person name="Phillimore B."/>
            <person name="Tracey A."/>
            <person name="Corby N."/>
            <person name="Dunn M."/>
            <person name="Johnson C."/>
            <person name="Wood J."/>
            <person name="Clark S."/>
            <person name="Pelan S."/>
            <person name="Griffiths G."/>
            <person name="Smith M."/>
            <person name="Glithero R."/>
            <person name="Howden P."/>
            <person name="Barker N."/>
            <person name="Lloyd C."/>
            <person name="Stevens C."/>
            <person name="Harley J."/>
            <person name="Holt K."/>
            <person name="Panagiotidis G."/>
            <person name="Lovell J."/>
            <person name="Beasley H."/>
            <person name="Henderson C."/>
            <person name="Gordon D."/>
            <person name="Auger K."/>
            <person name="Wright D."/>
            <person name="Collins J."/>
            <person name="Raisen C."/>
            <person name="Dyer L."/>
            <person name="Leung K."/>
            <person name="Robertson L."/>
            <person name="Ambridge K."/>
            <person name="Leongamornlert D."/>
            <person name="McGuire S."/>
            <person name="Gilderthorp R."/>
            <person name="Griffiths C."/>
            <person name="Manthravadi D."/>
            <person name="Nichol S."/>
            <person name="Barker G."/>
            <person name="Whitehead S."/>
            <person name="Kay M."/>
            <person name="Brown J."/>
            <person name="Murnane C."/>
            <person name="Gray E."/>
            <person name="Humphries M."/>
            <person name="Sycamore N."/>
            <person name="Barker D."/>
            <person name="Saunders D."/>
            <person name="Wallis J."/>
            <person name="Babbage A."/>
            <person name="Hammond S."/>
            <person name="Mashreghi-Mohammadi M."/>
            <person name="Barr L."/>
            <person name="Martin S."/>
            <person name="Wray P."/>
            <person name="Ellington A."/>
            <person name="Matthews N."/>
            <person name="Ellwood M."/>
            <person name="Woodmansey R."/>
            <person name="Clark G."/>
            <person name="Cooper J."/>
            <person name="Tromans A."/>
            <person name="Grafham D."/>
            <person name="Skuce C."/>
            <person name="Pandian R."/>
            <person name="Andrews R."/>
            <person name="Harrison E."/>
            <person name="Kimberley A."/>
            <person name="Garnett J."/>
            <person name="Fosker N."/>
            <person name="Hall R."/>
            <person name="Garner P."/>
            <person name="Kelly D."/>
            <person name="Bird C."/>
            <person name="Palmer S."/>
            <person name="Gehring I."/>
            <person name="Berger A."/>
            <person name="Dooley C.M."/>
            <person name="Ersan-Urun Z."/>
            <person name="Eser C."/>
            <person name="Geiger H."/>
            <person name="Geisler M."/>
            <person name="Karotki L."/>
            <person name="Kirn A."/>
            <person name="Konantz J."/>
            <person name="Konantz M."/>
            <person name="Oberlander M."/>
            <person name="Rudolph-Geiger S."/>
            <person name="Teucke M."/>
            <person name="Lanz C."/>
            <person name="Raddatz G."/>
            <person name="Osoegawa K."/>
            <person name="Zhu B."/>
            <person name="Rapp A."/>
            <person name="Widaa S."/>
            <person name="Langford C."/>
            <person name="Yang F."/>
            <person name="Schuster S.C."/>
            <person name="Carter N.P."/>
            <person name="Harrow J."/>
            <person name="Ning Z."/>
            <person name="Herrero J."/>
            <person name="Searle S.M."/>
            <person name="Enright A."/>
            <person name="Geisler R."/>
            <person name="Plasterk R.H."/>
            <person name="Lee C."/>
            <person name="Westerfield M."/>
            <person name="de Jong P.J."/>
            <person name="Zon L.I."/>
            <person name="Postlethwait J.H."/>
            <person name="Nusslein-Volhard C."/>
            <person name="Hubbard T.J."/>
            <person name="Roest Crollius H."/>
            <person name="Rogers J."/>
            <person name="Stemple D.L."/>
        </authorList>
    </citation>
    <scope>NUCLEOTIDE SEQUENCE [LARGE SCALE GENOMIC DNA]</scope>
    <source>
        <strain>Tuebingen</strain>
    </source>
</reference>
<reference key="2">
    <citation type="journal article" date="2010" name="Dev. Cell">
        <title>Broad-minded links cell cycle-related kinase to cilia assembly and hedgehog signal transduction.</title>
        <authorList>
            <person name="Ko H.W."/>
            <person name="Norman R.X."/>
            <person name="Tran J."/>
            <person name="Fuller K.P."/>
            <person name="Fukuda M."/>
            <person name="Eggenschwiler J.T."/>
        </authorList>
    </citation>
    <scope>FUNCTION</scope>
    <scope>DISRUPTION PHENOTYPE</scope>
</reference>
<keyword id="KW-0966">Cell projection</keyword>
<keyword id="KW-0969">Cilium</keyword>
<keyword id="KW-0963">Cytoplasm</keyword>
<keyword id="KW-0217">Developmental protein</keyword>
<keyword id="KW-1185">Reference proteome</keyword>
<dbReference type="EMBL" id="BX470129">
    <property type="protein sequence ID" value="CAI11664.2"/>
    <property type="molecule type" value="Genomic_DNA"/>
</dbReference>
<dbReference type="EMBL" id="BX470071">
    <property type="protein sequence ID" value="CAI11664.2"/>
    <property type="status" value="JOINED"/>
    <property type="molecule type" value="Genomic_DNA"/>
</dbReference>
<dbReference type="EMBL" id="CT955964">
    <property type="protein sequence ID" value="CAI11664.2"/>
    <property type="status" value="JOINED"/>
    <property type="molecule type" value="Genomic_DNA"/>
</dbReference>
<dbReference type="EMBL" id="BX470071">
    <property type="protein sequence ID" value="CAI20996.2"/>
    <property type="molecule type" value="Genomic_DNA"/>
</dbReference>
<dbReference type="EMBL" id="BX470129">
    <property type="protein sequence ID" value="CAI20996.2"/>
    <property type="status" value="JOINED"/>
    <property type="molecule type" value="Genomic_DNA"/>
</dbReference>
<dbReference type="EMBL" id="CT955964">
    <property type="protein sequence ID" value="CAI20996.2"/>
    <property type="status" value="JOINED"/>
    <property type="molecule type" value="Genomic_DNA"/>
</dbReference>
<dbReference type="EMBL" id="CT955964">
    <property type="protein sequence ID" value="CAN88284.1"/>
    <property type="molecule type" value="Genomic_DNA"/>
</dbReference>
<dbReference type="EMBL" id="BX470071">
    <property type="protein sequence ID" value="CAN88284.1"/>
    <property type="status" value="JOINED"/>
    <property type="molecule type" value="Genomic_DNA"/>
</dbReference>
<dbReference type="EMBL" id="BX470129">
    <property type="protein sequence ID" value="CAN88284.1"/>
    <property type="status" value="JOINED"/>
    <property type="molecule type" value="Genomic_DNA"/>
</dbReference>
<dbReference type="RefSeq" id="NP_001093493.1">
    <property type="nucleotide sequence ID" value="NM_001100023.1"/>
</dbReference>
<dbReference type="SMR" id="Q5RHR6"/>
<dbReference type="FunCoup" id="Q5RHR6">
    <property type="interactions" value="562"/>
</dbReference>
<dbReference type="STRING" id="7955.ENSDARP00000122813"/>
<dbReference type="PaxDb" id="7955-ENSDARP00000122813"/>
<dbReference type="Ensembl" id="ENSDART00000061168">
    <property type="protein sequence ID" value="ENSDARP00000061167"/>
    <property type="gene ID" value="ENSDARG00000041734"/>
</dbReference>
<dbReference type="Ensembl" id="ENSDART00000144401">
    <property type="protein sequence ID" value="ENSDARP00000122813"/>
    <property type="gene ID" value="ENSDARG00000041734"/>
</dbReference>
<dbReference type="GeneID" id="566474"/>
<dbReference type="KEGG" id="dre:566474"/>
<dbReference type="AGR" id="ZFIN:ZDB-GENE-061106-5"/>
<dbReference type="CTD" id="221322"/>
<dbReference type="ZFIN" id="ZDB-GENE-061106-5">
    <property type="gene designation" value="tbc1d32"/>
</dbReference>
<dbReference type="eggNOG" id="ENOG502QR93">
    <property type="taxonomic scope" value="Eukaryota"/>
</dbReference>
<dbReference type="HOGENOM" id="CLU_260246_0_0_1"/>
<dbReference type="InParanoid" id="Q5RHR6"/>
<dbReference type="OMA" id="ECVTFMS"/>
<dbReference type="OrthoDB" id="1668230at2759"/>
<dbReference type="PhylomeDB" id="Q5RHR6"/>
<dbReference type="TreeFam" id="TF329092"/>
<dbReference type="PRO" id="PR:Q5RHR6"/>
<dbReference type="Proteomes" id="UP000000437">
    <property type="component" value="Chromosome 20"/>
</dbReference>
<dbReference type="Bgee" id="ENSDARG00000041734">
    <property type="expression patterns" value="Expressed in testis and 16 other cell types or tissues"/>
</dbReference>
<dbReference type="ExpressionAtlas" id="Q5RHR6">
    <property type="expression patterns" value="baseline and differential"/>
</dbReference>
<dbReference type="GO" id="GO:0005929">
    <property type="term" value="C:cilium"/>
    <property type="evidence" value="ECO:0007669"/>
    <property type="project" value="UniProtKB-SubCell"/>
</dbReference>
<dbReference type="GO" id="GO:0005737">
    <property type="term" value="C:cytoplasm"/>
    <property type="evidence" value="ECO:0007669"/>
    <property type="project" value="UniProtKB-SubCell"/>
</dbReference>
<dbReference type="GO" id="GO:0035082">
    <property type="term" value="P:axoneme assembly"/>
    <property type="evidence" value="ECO:0000315"/>
    <property type="project" value="MGI"/>
</dbReference>
<dbReference type="GO" id="GO:0060271">
    <property type="term" value="P:cilium assembly"/>
    <property type="evidence" value="ECO:0000315"/>
    <property type="project" value="ZFIN"/>
</dbReference>
<dbReference type="GO" id="GO:1905515">
    <property type="term" value="P:non-motile cilium assembly"/>
    <property type="evidence" value="ECO:0000318"/>
    <property type="project" value="GO_Central"/>
</dbReference>
<dbReference type="FunFam" id="1.10.472.80:FF:000031">
    <property type="entry name" value="TBC1 domain family, member 32"/>
    <property type="match status" value="1"/>
</dbReference>
<dbReference type="Gene3D" id="1.10.472.80">
    <property type="entry name" value="Ypt/Rab-GAP domain of gyp1p, domain 3"/>
    <property type="match status" value="1"/>
</dbReference>
<dbReference type="InterPro" id="IPR055392">
    <property type="entry name" value="BROMI_C"/>
</dbReference>
<dbReference type="InterPro" id="IPR032735">
    <property type="entry name" value="BROMI_M"/>
</dbReference>
<dbReference type="InterPro" id="IPR055391">
    <property type="entry name" value="BROMI_N"/>
</dbReference>
<dbReference type="InterPro" id="IPR039156">
    <property type="entry name" value="PHAF1/BROMI"/>
</dbReference>
<dbReference type="InterPro" id="IPR035969">
    <property type="entry name" value="Rab-GAP_TBC_sf"/>
</dbReference>
<dbReference type="PANTHER" id="PTHR13465:SF3">
    <property type="entry name" value="PROTEIN BROAD-MINDED"/>
    <property type="match status" value="1"/>
</dbReference>
<dbReference type="PANTHER" id="PTHR13465">
    <property type="entry name" value="UPF0183 PROTEIN"/>
    <property type="match status" value="1"/>
</dbReference>
<dbReference type="Pfam" id="PF14961">
    <property type="entry name" value="BROMI"/>
    <property type="match status" value="1"/>
</dbReference>
<dbReference type="Pfam" id="PF23440">
    <property type="entry name" value="BROMI_C"/>
    <property type="match status" value="1"/>
</dbReference>
<dbReference type="Pfam" id="PF23431">
    <property type="entry name" value="BROMI_N"/>
    <property type="match status" value="1"/>
</dbReference>
<dbReference type="SUPFAM" id="SSF47923">
    <property type="entry name" value="Ypt/Rab-GAP domain of gyp1p"/>
    <property type="match status" value="1"/>
</dbReference>
<gene>
    <name type="primary">tbc1d32</name>
    <name type="synonym">bromi</name>
    <name type="ORF">si:dkey-233p4.1</name>
</gene>
<protein>
    <recommendedName>
        <fullName>Protein broad-minded</fullName>
    </recommendedName>
    <alternativeName>
        <fullName>TBC1 domain family member 32</fullName>
    </alternativeName>
</protein>
<accession>Q5RHR6</accession>
<feature type="chain" id="PRO_0000360032" description="Protein broad-minded">
    <location>
        <begin position="1"/>
        <end position="1298"/>
    </location>
</feature>
<feature type="domain" description="Rab-GAP TBC">
    <location>
        <begin position="1171"/>
        <end position="1283"/>
    </location>
</feature>